<accession>P69064</accession>
<accession>P40703</accession>
<accession>Q57260</accession>
<keyword id="KW-0010">Activator</keyword>
<keyword id="KW-0143">Chaperone</keyword>
<keyword id="KW-0963">Cytoplasm</keyword>
<keyword id="KW-0804">Transcription</keyword>
<keyword id="KW-0805">Transcription regulation</keyword>
<keyword id="KW-0843">Virulence</keyword>
<sequence>MDYQNNVSEERVAEMIWDAVSEGATLKDVHGIPQDMMDGLYAHAYEFYNQGRLDEAETFFRFLCIYDFYNPDYTMGLAAVCQLKKQFQKACDLYAVAFTLLKNDYRPVFFTGQCQLLMRKAAKARQCFELVNERTEDESLRAKALVYLEALKTAETEQHSEQEKE</sequence>
<name>SICA_SALDU</name>
<organism>
    <name type="scientific">Salmonella dublin</name>
    <dbReference type="NCBI Taxonomy" id="98360"/>
    <lineage>
        <taxon>Bacteria</taxon>
        <taxon>Pseudomonadati</taxon>
        <taxon>Pseudomonadota</taxon>
        <taxon>Gammaproteobacteria</taxon>
        <taxon>Enterobacterales</taxon>
        <taxon>Enterobacteriaceae</taxon>
        <taxon>Salmonella</taxon>
    </lineage>
</organism>
<reference key="1">
    <citation type="submission" date="1996-08" db="EMBL/GenBank/DDBJ databases">
        <title>Sip invasins of Salmonella dublin are involved in macrophage cytotoxicity and mouse virulence.</title>
        <authorList>
            <person name="Mullan P.B."/>
            <person name="Gautier A.V."/>
            <person name="Wood M.W."/>
            <person name="Edwards M.H."/>
            <person name="Jones B.V."/>
            <person name="Galyov E.E."/>
        </authorList>
    </citation>
    <scope>NUCLEOTIDE SEQUENCE [GENOMIC DNA]</scope>
    <source>
        <strain>2229</strain>
    </source>
</reference>
<dbReference type="EMBL" id="U66877">
    <property type="protein sequence ID" value="AAB06794.1"/>
    <property type="molecule type" value="Genomic_DNA"/>
</dbReference>
<dbReference type="RefSeq" id="WP_000386309.1">
    <property type="nucleotide sequence ID" value="NZ_VDCP01000001.1"/>
</dbReference>
<dbReference type="SMR" id="P69064"/>
<dbReference type="GeneID" id="66757211"/>
<dbReference type="PATRIC" id="fig|98360.39.peg.2685"/>
<dbReference type="OMA" id="FHSAECH"/>
<dbReference type="GO" id="GO:0005737">
    <property type="term" value="C:cytoplasm"/>
    <property type="evidence" value="ECO:0007669"/>
    <property type="project" value="UniProtKB-SubCell"/>
</dbReference>
<dbReference type="FunFam" id="1.25.40.10:FF:000100">
    <property type="entry name" value="Type III secretion system translocator chaperone SicA"/>
    <property type="match status" value="1"/>
</dbReference>
<dbReference type="Gene3D" id="1.25.40.10">
    <property type="entry name" value="Tetratricopeptide repeat domain"/>
    <property type="match status" value="1"/>
</dbReference>
<dbReference type="InterPro" id="IPR005415">
    <property type="entry name" value="T3SS_Ca_resp_chp_LcrH/SycD"/>
</dbReference>
<dbReference type="InterPro" id="IPR016379">
    <property type="entry name" value="T3SS_Ca_resp_chp_LcrH/SycD_sub"/>
</dbReference>
<dbReference type="InterPro" id="IPR011716">
    <property type="entry name" value="TPR-3"/>
</dbReference>
<dbReference type="InterPro" id="IPR011990">
    <property type="entry name" value="TPR-like_helical_dom_sf"/>
</dbReference>
<dbReference type="NCBIfam" id="TIGR02552">
    <property type="entry name" value="LcrH_SycD"/>
    <property type="match status" value="1"/>
</dbReference>
<dbReference type="NCBIfam" id="NF011859">
    <property type="entry name" value="PRK15331.1"/>
    <property type="match status" value="1"/>
</dbReference>
<dbReference type="Pfam" id="PF07720">
    <property type="entry name" value="TPR_3"/>
    <property type="match status" value="2"/>
</dbReference>
<dbReference type="PIRSF" id="PIRSF003165">
    <property type="entry name" value="Chaperone_SicA"/>
    <property type="match status" value="1"/>
</dbReference>
<dbReference type="PRINTS" id="PR01595">
    <property type="entry name" value="SYCDCHAPRONE"/>
</dbReference>
<dbReference type="SUPFAM" id="SSF48452">
    <property type="entry name" value="TPR-like"/>
    <property type="match status" value="1"/>
</dbReference>
<proteinExistence type="inferred from homology"/>
<feature type="chain" id="PRO_0000206487" description="Chaperone protein SicA">
    <location>
        <begin position="1"/>
        <end position="165"/>
    </location>
</feature>
<comment type="function">
    <text evidence="1">Type III secretion-associated chaperone required for SipB and SipC stabilization. Prevents premature association of SipB with SipC, which may lead to their targeting for degradation. Along with InvF, required for transcription activation of sigDE (sopB pipC), sicAsipBCDA, and sopE (By similarity).</text>
</comment>
<comment type="subunit">
    <text evidence="1">Dimer or higher-order oligomers.</text>
</comment>
<comment type="subcellular location">
    <subcellularLocation>
        <location evidence="2">Cytoplasm</location>
    </subcellularLocation>
</comment>
<comment type="similarity">
    <text evidence="2">Belongs to the LcrH/SycD chaperone family.</text>
</comment>
<gene>
    <name type="primary">sicA</name>
</gene>
<evidence type="ECO:0000250" key="1"/>
<evidence type="ECO:0000305" key="2"/>
<protein>
    <recommendedName>
        <fullName>Chaperone protein SicA</fullName>
    </recommendedName>
    <alternativeName>
        <fullName>Salmonella invasin chaperone</fullName>
    </alternativeName>
</protein>